<comment type="function">
    <text evidence="1 2 3 4">May act as an oxidative stress mediator by inhibiting thioredoxin activity or by limiting its bioavailability (PubMed:10843682). Interacts with COPS5 and restores COPS5-induced suppression of CDKN1B stability, blocking the COPS5-mediated translocation of CDKN1B from the nucleus to the cytoplasm (PubMed:15930262). Functions as a transcriptional repressor, possibly by acting as a bridge molecule between transcription factors and corepressor complexes, and over-expression will induce G0/G1 cell cycle arrest (By similarity). Required for the maturation of natural killer cells (PubMed:15723808). Acts as a suppressor of tumor cell growth. Inhibits the proteasomal degradation of DDIT4, and thereby contributes to the inhibition of the mammalian target of rapamycin complex 1 (mTORC1) (By similarity).</text>
</comment>
<comment type="subunit">
    <text evidence="1">Homodimer; disulfide-linked. Interacts with TXN/thioredoxin through its redox-active site. Interacts with transcriptional repressors ZBTB16, ZBTB32 and HDAC1. Interacts with DDIT4.</text>
</comment>
<comment type="subcellular location">
    <subcellularLocation>
        <location evidence="2">Cytoplasm</location>
    </subcellularLocation>
</comment>
<comment type="alternative products">
    <event type="alternative splicing"/>
    <isoform>
        <id>Q8BG60-1</id>
        <name>1</name>
        <sequence type="displayed"/>
    </isoform>
    <isoform>
        <id>Q8BG60-2</id>
        <name>2</name>
        <sequence type="described" ref="VSP_020653"/>
    </isoform>
</comment>
<comment type="tissue specificity">
    <text evidence="2">Ubiquitously expressed.</text>
</comment>
<comment type="PTM">
    <text evidence="1">Ubiquitinated; undergoes heterotypic 'Lys-48'-/'Lys-63'-branched polyubiquitination catalyzed by ITCH and UBR5 resulting in proteasomal degradation. Deubiquitinated by USP5, leading to TXNIP stabilization.</text>
</comment>
<comment type="disruption phenotype">
    <text evidence="3">Marked reduction in the numbers of natural killer cells, low levels of Il2rb expression in the precursor hematopoietic stem cells and severe lymphoid hyperplasia in the small intestine.</text>
</comment>
<comment type="similarity">
    <text evidence="9">Belongs to the arrestin family.</text>
</comment>
<sequence length="397" mass="44363">MVMFKKIKSFEVVFNDPEKVYGSGEKVAGRVIVEVCEVTRVKAVRILACGVAKVLWMQGSQQCKQTLDYLRYEDTLLLEEQPTAGENEMVIMRPGNKYEYKFGFELPQGPLGTSFKGKYGCVDYWVKAFLDRPSQPTQEAKKNFEVMDLVDVNTPDLMAPVSAKKEKKVSCMFIPDGRVSVSARIDRKGFCEGDDISIHADFENTCSRIVVPKAAIVARHTYLANGQTKVFTQKLSSVRGNHIISGTCASWRGKSLRVQKIRPSILGCNILKVEYSLLIYVSVPGSKKVILDLPLVIGSRSGLSSRTSSMASRTSSEMSWIDLNIPDTPEAPPCYMDIIPEDHRLESPTTPLLDDVDDSQDSPIFMYAPEFQFMPPPTYTEVDPCVLNNNNNNNNVQ</sequence>
<organism>
    <name type="scientific">Mus musculus</name>
    <name type="common">Mouse</name>
    <dbReference type="NCBI Taxonomy" id="10090"/>
    <lineage>
        <taxon>Eukaryota</taxon>
        <taxon>Metazoa</taxon>
        <taxon>Chordata</taxon>
        <taxon>Craniata</taxon>
        <taxon>Vertebrata</taxon>
        <taxon>Euteleostomi</taxon>
        <taxon>Mammalia</taxon>
        <taxon>Eutheria</taxon>
        <taxon>Euarchontoglires</taxon>
        <taxon>Glires</taxon>
        <taxon>Rodentia</taxon>
        <taxon>Myomorpha</taxon>
        <taxon>Muroidea</taxon>
        <taxon>Muridae</taxon>
        <taxon>Murinae</taxon>
        <taxon>Mus</taxon>
        <taxon>Mus</taxon>
    </lineage>
</organism>
<name>TXNIP_MOUSE</name>
<protein>
    <recommendedName>
        <fullName>Thioredoxin-interacting protein</fullName>
    </recommendedName>
    <alternativeName>
        <fullName>Vitamin D3 up-regulated protein 1</fullName>
    </alternativeName>
</protein>
<accession>Q8BG60</accession>
<accession>Q8BGQ0</accession>
<accession>Q8K2B2</accession>
<accession>Q9DC00</accession>
<accession>Q9EP90</accession>
<accession>Q9R115</accession>
<keyword id="KW-0025">Alternative splicing</keyword>
<keyword id="KW-0131">Cell cycle</keyword>
<keyword id="KW-0963">Cytoplasm</keyword>
<keyword id="KW-1015">Disulfide bond</keyword>
<keyword id="KW-1017">Isopeptide bond</keyword>
<keyword id="KW-0597">Phosphoprotein</keyword>
<keyword id="KW-1185">Reference proteome</keyword>
<keyword id="KW-0804">Transcription</keyword>
<keyword id="KW-0805">Transcription regulation</keyword>
<keyword id="KW-0043">Tumor suppressor</keyword>
<keyword id="KW-0832">Ubl conjugation</keyword>
<proteinExistence type="evidence at protein level"/>
<gene>
    <name type="primary">Txnip</name>
    <name type="synonym">Vdup1</name>
</gene>
<feature type="chain" id="PRO_0000250490" description="Thioredoxin-interacting protein">
    <location>
        <begin position="1"/>
        <end position="397"/>
    </location>
</feature>
<feature type="modified residue" description="Phosphoserine" evidence="1">
    <location>
        <position position="362"/>
    </location>
</feature>
<feature type="disulfide bond" description="Interchain" evidence="1">
    <location>
        <position position="63"/>
    </location>
</feature>
<feature type="cross-link" description="Glycyl lysine isopeptide (Lys-Gly) (interchain with G-Cter in ubiquitin)" evidence="1">
    <location>
        <position position="213"/>
    </location>
</feature>
<feature type="splice variant" id="VSP_020653" description="In isoform 2." evidence="5 6 7 8">
    <location>
        <position position="84"/>
    </location>
</feature>
<feature type="sequence conflict" description="In Ref. 3; BAB23444." evidence="9" ref="3">
    <original>E</original>
    <variation>G</variation>
    <location>
        <position position="79"/>
    </location>
</feature>
<feature type="sequence conflict" description="In Ref. 1; AAD48499." evidence="9" ref="1">
    <original>K</original>
    <variation>E</variation>
    <location>
        <position position="165"/>
    </location>
</feature>
<feature type="sequence conflict" description="In Ref. 1; AAD48499." evidence="9" ref="1">
    <original>P</original>
    <variation>R</variation>
    <location>
        <position position="175"/>
    </location>
</feature>
<feature type="sequence conflict" description="In Ref. 2; AAG32665/AAG32666." evidence="9" ref="2">
    <original>S</original>
    <variation>F</variation>
    <location>
        <position position="308"/>
    </location>
</feature>
<feature type="sequence conflict" description="In Ref. 4; AAH31850." evidence="9" ref="4">
    <original>N</original>
    <variation>NN</variation>
    <location>
        <position position="395"/>
    </location>
</feature>
<feature type="sequence conflict" description="In Ref. 1; AAD48499." evidence="9" ref="1">
    <location>
        <position position="395"/>
    </location>
</feature>
<evidence type="ECO:0000250" key="1">
    <source>
        <dbReference type="UniProtKB" id="Q9H3M7"/>
    </source>
</evidence>
<evidence type="ECO:0000269" key="2">
    <source>
    </source>
</evidence>
<evidence type="ECO:0000269" key="3">
    <source>
    </source>
</evidence>
<evidence type="ECO:0000269" key="4">
    <source>
    </source>
</evidence>
<evidence type="ECO:0000303" key="5">
    <source>
    </source>
</evidence>
<evidence type="ECO:0000303" key="6">
    <source>
    </source>
</evidence>
<evidence type="ECO:0000303" key="7">
    <source>
    </source>
</evidence>
<evidence type="ECO:0000303" key="8">
    <source>
    </source>
</evidence>
<evidence type="ECO:0000305" key="9"/>
<reference key="1">
    <citation type="journal article" date="2000" name="J. Immunol.">
        <title>Vitamin D3 up-regulated protein 1 mediates oxidative stress via suppressing the thioredoxin function.</title>
        <authorList>
            <person name="Junn E."/>
            <person name="Han S.H."/>
            <person name="Im J.Y."/>
            <person name="Yang Y."/>
            <person name="Cho E.W."/>
            <person name="Um H.D."/>
            <person name="Kim D.K."/>
            <person name="Lee K.W."/>
            <person name="Han P.L."/>
            <person name="Rhee S.G."/>
            <person name="Choi I."/>
        </authorList>
    </citation>
    <scope>NUCLEOTIDE SEQUENCE [MRNA] (ISOFORM 2)</scope>
    <scope>FUNCTION</scope>
    <scope>INTERACTION WITH TXN</scope>
    <scope>SUBCELLULAR LOCATION</scope>
    <scope>TISSUE SPECIFICITY</scope>
</reference>
<reference key="2">
    <citation type="journal article" date="2001" name="Gene">
        <title>Cloning, genetic characterization, and chromosomal mapping of the mouse VDUP1 gene.</title>
        <authorList>
            <person name="Ludwig D.L."/>
            <person name="Kotanides H."/>
            <person name="Le T."/>
            <person name="Chavkin D."/>
            <person name="Bohlen P."/>
            <person name="Witte L."/>
        </authorList>
    </citation>
    <scope>NUCLEOTIDE SEQUENCE [GENOMIC DNA / MRNA] (ISOFORM 2)</scope>
    <source>
        <strain>C57BL/6J</strain>
    </source>
</reference>
<reference key="3">
    <citation type="journal article" date="2005" name="Science">
        <title>The transcriptional landscape of the mammalian genome.</title>
        <authorList>
            <person name="Carninci P."/>
            <person name="Kasukawa T."/>
            <person name="Katayama S."/>
            <person name="Gough J."/>
            <person name="Frith M.C."/>
            <person name="Maeda N."/>
            <person name="Oyama R."/>
            <person name="Ravasi T."/>
            <person name="Lenhard B."/>
            <person name="Wells C."/>
            <person name="Kodzius R."/>
            <person name="Shimokawa K."/>
            <person name="Bajic V.B."/>
            <person name="Brenner S.E."/>
            <person name="Batalov S."/>
            <person name="Forrest A.R."/>
            <person name="Zavolan M."/>
            <person name="Davis M.J."/>
            <person name="Wilming L.G."/>
            <person name="Aidinis V."/>
            <person name="Allen J.E."/>
            <person name="Ambesi-Impiombato A."/>
            <person name="Apweiler R."/>
            <person name="Aturaliya R.N."/>
            <person name="Bailey T.L."/>
            <person name="Bansal M."/>
            <person name="Baxter L."/>
            <person name="Beisel K.W."/>
            <person name="Bersano T."/>
            <person name="Bono H."/>
            <person name="Chalk A.M."/>
            <person name="Chiu K.P."/>
            <person name="Choudhary V."/>
            <person name="Christoffels A."/>
            <person name="Clutterbuck D.R."/>
            <person name="Crowe M.L."/>
            <person name="Dalla E."/>
            <person name="Dalrymple B.P."/>
            <person name="de Bono B."/>
            <person name="Della Gatta G."/>
            <person name="di Bernardo D."/>
            <person name="Down T."/>
            <person name="Engstrom P."/>
            <person name="Fagiolini M."/>
            <person name="Faulkner G."/>
            <person name="Fletcher C.F."/>
            <person name="Fukushima T."/>
            <person name="Furuno M."/>
            <person name="Futaki S."/>
            <person name="Gariboldi M."/>
            <person name="Georgii-Hemming P."/>
            <person name="Gingeras T.R."/>
            <person name="Gojobori T."/>
            <person name="Green R.E."/>
            <person name="Gustincich S."/>
            <person name="Harbers M."/>
            <person name="Hayashi Y."/>
            <person name="Hensch T.K."/>
            <person name="Hirokawa N."/>
            <person name="Hill D."/>
            <person name="Huminiecki L."/>
            <person name="Iacono M."/>
            <person name="Ikeo K."/>
            <person name="Iwama A."/>
            <person name="Ishikawa T."/>
            <person name="Jakt M."/>
            <person name="Kanapin A."/>
            <person name="Katoh M."/>
            <person name="Kawasawa Y."/>
            <person name="Kelso J."/>
            <person name="Kitamura H."/>
            <person name="Kitano H."/>
            <person name="Kollias G."/>
            <person name="Krishnan S.P."/>
            <person name="Kruger A."/>
            <person name="Kummerfeld S.K."/>
            <person name="Kurochkin I.V."/>
            <person name="Lareau L.F."/>
            <person name="Lazarevic D."/>
            <person name="Lipovich L."/>
            <person name="Liu J."/>
            <person name="Liuni S."/>
            <person name="McWilliam S."/>
            <person name="Madan Babu M."/>
            <person name="Madera M."/>
            <person name="Marchionni L."/>
            <person name="Matsuda H."/>
            <person name="Matsuzawa S."/>
            <person name="Miki H."/>
            <person name="Mignone F."/>
            <person name="Miyake S."/>
            <person name="Morris K."/>
            <person name="Mottagui-Tabar S."/>
            <person name="Mulder N."/>
            <person name="Nakano N."/>
            <person name="Nakauchi H."/>
            <person name="Ng P."/>
            <person name="Nilsson R."/>
            <person name="Nishiguchi S."/>
            <person name="Nishikawa S."/>
            <person name="Nori F."/>
            <person name="Ohara O."/>
            <person name="Okazaki Y."/>
            <person name="Orlando V."/>
            <person name="Pang K.C."/>
            <person name="Pavan W.J."/>
            <person name="Pavesi G."/>
            <person name="Pesole G."/>
            <person name="Petrovsky N."/>
            <person name="Piazza S."/>
            <person name="Reed J."/>
            <person name="Reid J.F."/>
            <person name="Ring B.Z."/>
            <person name="Ringwald M."/>
            <person name="Rost B."/>
            <person name="Ruan Y."/>
            <person name="Salzberg S.L."/>
            <person name="Sandelin A."/>
            <person name="Schneider C."/>
            <person name="Schoenbach C."/>
            <person name="Sekiguchi K."/>
            <person name="Semple C.A."/>
            <person name="Seno S."/>
            <person name="Sessa L."/>
            <person name="Sheng Y."/>
            <person name="Shibata Y."/>
            <person name="Shimada H."/>
            <person name="Shimada K."/>
            <person name="Silva D."/>
            <person name="Sinclair B."/>
            <person name="Sperling S."/>
            <person name="Stupka E."/>
            <person name="Sugiura K."/>
            <person name="Sultana R."/>
            <person name="Takenaka Y."/>
            <person name="Taki K."/>
            <person name="Tammoja K."/>
            <person name="Tan S.L."/>
            <person name="Tang S."/>
            <person name="Taylor M.S."/>
            <person name="Tegner J."/>
            <person name="Teichmann S.A."/>
            <person name="Ueda H.R."/>
            <person name="van Nimwegen E."/>
            <person name="Verardo R."/>
            <person name="Wei C.L."/>
            <person name="Yagi K."/>
            <person name="Yamanishi H."/>
            <person name="Zabarovsky E."/>
            <person name="Zhu S."/>
            <person name="Zimmer A."/>
            <person name="Hide W."/>
            <person name="Bult C."/>
            <person name="Grimmond S.M."/>
            <person name="Teasdale R.D."/>
            <person name="Liu E.T."/>
            <person name="Brusic V."/>
            <person name="Quackenbush J."/>
            <person name="Wahlestedt C."/>
            <person name="Mattick J.S."/>
            <person name="Hume D.A."/>
            <person name="Kai C."/>
            <person name="Sasaki D."/>
            <person name="Tomaru Y."/>
            <person name="Fukuda S."/>
            <person name="Kanamori-Katayama M."/>
            <person name="Suzuki M."/>
            <person name="Aoki J."/>
            <person name="Arakawa T."/>
            <person name="Iida J."/>
            <person name="Imamura K."/>
            <person name="Itoh M."/>
            <person name="Kato T."/>
            <person name="Kawaji H."/>
            <person name="Kawagashira N."/>
            <person name="Kawashima T."/>
            <person name="Kojima M."/>
            <person name="Kondo S."/>
            <person name="Konno H."/>
            <person name="Nakano K."/>
            <person name="Ninomiya N."/>
            <person name="Nishio T."/>
            <person name="Okada M."/>
            <person name="Plessy C."/>
            <person name="Shibata K."/>
            <person name="Shiraki T."/>
            <person name="Suzuki S."/>
            <person name="Tagami M."/>
            <person name="Waki K."/>
            <person name="Watahiki A."/>
            <person name="Okamura-Oho Y."/>
            <person name="Suzuki H."/>
            <person name="Kawai J."/>
            <person name="Hayashizaki Y."/>
        </authorList>
    </citation>
    <scope>NUCLEOTIDE SEQUENCE [LARGE SCALE MRNA] (ISOFORMS 1 AND 2)</scope>
    <source>
        <strain>C57BL/6J</strain>
        <strain>NOD</strain>
        <tissue>Cerebellum</tissue>
        <tissue>Lung</tissue>
        <tissue>Thymus</tissue>
    </source>
</reference>
<reference key="4">
    <citation type="journal article" date="2004" name="Genome Res.">
        <title>The status, quality, and expansion of the NIH full-length cDNA project: the Mammalian Gene Collection (MGC).</title>
        <authorList>
            <consortium name="The MGC Project Team"/>
        </authorList>
    </citation>
    <scope>NUCLEOTIDE SEQUENCE [LARGE SCALE MRNA] (ISOFORM 2)</scope>
    <source>
        <strain>Czech II</strain>
        <tissue>Mammary tumor</tissue>
    </source>
</reference>
<reference key="5">
    <citation type="journal article" date="2005" name="Cancer Res.">
        <title>Tumor suppressor VDUP1 increases p27(kip1) stability by inhibiting JAB1.</title>
        <authorList>
            <person name="Jeon J.H."/>
            <person name="Lee K.N."/>
            <person name="Hwang C.Y."/>
            <person name="Kwon K.S."/>
            <person name="You K.H."/>
            <person name="Choi I."/>
        </authorList>
    </citation>
    <scope>FUNCTION</scope>
</reference>
<reference key="6">
    <citation type="journal article" date="2005" name="Immunity">
        <title>VDUP1 is required for the development of natural killer cells.</title>
        <authorList>
            <person name="Lee K.N."/>
            <person name="Kang H.S."/>
            <person name="Jeon J.H."/>
            <person name="Kim E.M."/>
            <person name="Yoon S.R."/>
            <person name="Song H."/>
            <person name="Lyu C.Y."/>
            <person name="Piao Z.H."/>
            <person name="Kim S.U."/>
            <person name="Han Y.H."/>
            <person name="Song S.S."/>
            <person name="Lee Y.H."/>
            <person name="Song K.S."/>
            <person name="Kim Y.M."/>
            <person name="Yu D.Y."/>
            <person name="Choi I."/>
        </authorList>
    </citation>
    <scope>FUNCTION</scope>
    <scope>DISRUPTION PHENOTYPE</scope>
</reference>
<dbReference type="EMBL" id="AF173681">
    <property type="protein sequence ID" value="AAD48499.1"/>
    <property type="molecule type" value="mRNA"/>
</dbReference>
<dbReference type="EMBL" id="AF282825">
    <property type="protein sequence ID" value="AAG32665.1"/>
    <property type="molecule type" value="Genomic_DNA"/>
</dbReference>
<dbReference type="EMBL" id="AF282826">
    <property type="protein sequence ID" value="AAG32666.1"/>
    <property type="molecule type" value="mRNA"/>
</dbReference>
<dbReference type="EMBL" id="AK004653">
    <property type="protein sequence ID" value="BAB23444.1"/>
    <property type="molecule type" value="mRNA"/>
</dbReference>
<dbReference type="EMBL" id="AK082476">
    <property type="protein sequence ID" value="BAC38504.1"/>
    <property type="molecule type" value="mRNA"/>
</dbReference>
<dbReference type="EMBL" id="AK088870">
    <property type="protein sequence ID" value="BAC40625.1"/>
    <property type="molecule type" value="mRNA"/>
</dbReference>
<dbReference type="EMBL" id="AK089304">
    <property type="protein sequence ID" value="BAC40834.1"/>
    <property type="molecule type" value="mRNA"/>
</dbReference>
<dbReference type="EMBL" id="AK089351">
    <property type="protein sequence ID" value="BAC40850.1"/>
    <property type="molecule type" value="mRNA"/>
</dbReference>
<dbReference type="EMBL" id="AK089403">
    <property type="protein sequence ID" value="BAC40868.1"/>
    <property type="molecule type" value="mRNA"/>
</dbReference>
<dbReference type="EMBL" id="AK155517">
    <property type="protein sequence ID" value="BAE33304.1"/>
    <property type="molecule type" value="mRNA"/>
</dbReference>
<dbReference type="EMBL" id="AK171205">
    <property type="protein sequence ID" value="BAE42311.1"/>
    <property type="molecule type" value="mRNA"/>
</dbReference>
<dbReference type="EMBL" id="AK171312">
    <property type="protein sequence ID" value="BAE42386.1"/>
    <property type="molecule type" value="mRNA"/>
</dbReference>
<dbReference type="EMBL" id="AK171425">
    <property type="protein sequence ID" value="BAE42444.1"/>
    <property type="molecule type" value="mRNA"/>
</dbReference>
<dbReference type="EMBL" id="AK171456">
    <property type="protein sequence ID" value="BAE42465.1"/>
    <property type="molecule type" value="mRNA"/>
</dbReference>
<dbReference type="EMBL" id="AK171464">
    <property type="protein sequence ID" value="BAE42470.1"/>
    <property type="molecule type" value="mRNA"/>
</dbReference>
<dbReference type="EMBL" id="AK171527">
    <property type="protein sequence ID" value="BAE42508.1"/>
    <property type="molecule type" value="mRNA"/>
</dbReference>
<dbReference type="EMBL" id="BC031850">
    <property type="protein sequence ID" value="AAH31850.1"/>
    <property type="molecule type" value="mRNA"/>
</dbReference>
<dbReference type="CCDS" id="CCDS17640.1">
    <molecule id="Q8BG60-2"/>
</dbReference>
<dbReference type="CCDS" id="CCDS38555.1">
    <molecule id="Q8BG60-1"/>
</dbReference>
<dbReference type="RefSeq" id="NP_001009935.1">
    <molecule id="Q8BG60-1"/>
    <property type="nucleotide sequence ID" value="NM_001009935.2"/>
</dbReference>
<dbReference type="RefSeq" id="NP_076208.2">
    <molecule id="Q8BG60-2"/>
    <property type="nucleotide sequence ID" value="NM_023719.2"/>
</dbReference>
<dbReference type="SMR" id="Q8BG60"/>
<dbReference type="BioGRID" id="207912">
    <property type="interactions" value="3"/>
</dbReference>
<dbReference type="CORUM" id="Q8BG60"/>
<dbReference type="FunCoup" id="Q8BG60">
    <property type="interactions" value="1714"/>
</dbReference>
<dbReference type="IntAct" id="Q8BG60">
    <property type="interactions" value="2"/>
</dbReference>
<dbReference type="MINT" id="Q8BG60"/>
<dbReference type="STRING" id="10090.ENSMUSP00000102710"/>
<dbReference type="GlyGen" id="Q8BG60">
    <property type="glycosylation" value="1 site, 1 O-linked glycan (1 site)"/>
</dbReference>
<dbReference type="iPTMnet" id="Q8BG60"/>
<dbReference type="PhosphoSitePlus" id="Q8BG60"/>
<dbReference type="jPOST" id="Q8BG60"/>
<dbReference type="PaxDb" id="10090-ENSMUSP00000102710"/>
<dbReference type="PeptideAtlas" id="Q8BG60"/>
<dbReference type="ProteomicsDB" id="298044">
    <molecule id="Q8BG60-1"/>
</dbReference>
<dbReference type="ProteomicsDB" id="298045">
    <molecule id="Q8BG60-2"/>
</dbReference>
<dbReference type="Pumba" id="Q8BG60"/>
<dbReference type="Antibodypedia" id="73170">
    <property type="antibodies" value="361 antibodies from 35 providers"/>
</dbReference>
<dbReference type="DNASU" id="56338"/>
<dbReference type="Ensembl" id="ENSMUST00000049093.8">
    <molecule id="Q8BG60-2"/>
    <property type="protein sequence ID" value="ENSMUSP00000041467.8"/>
    <property type="gene ID" value="ENSMUSG00000038393.15"/>
</dbReference>
<dbReference type="Ensembl" id="ENSMUST00000074519.13">
    <molecule id="Q8BG60-1"/>
    <property type="protein sequence ID" value="ENSMUSP00000102710.3"/>
    <property type="gene ID" value="ENSMUSG00000038393.15"/>
</dbReference>
<dbReference type="GeneID" id="56338"/>
<dbReference type="KEGG" id="mmu:56338"/>
<dbReference type="UCSC" id="uc008qnc.2">
    <molecule id="Q8BG60-1"/>
    <property type="organism name" value="mouse"/>
</dbReference>
<dbReference type="UCSC" id="uc008qnd.2">
    <molecule id="Q8BG60-2"/>
    <property type="organism name" value="mouse"/>
</dbReference>
<dbReference type="AGR" id="MGI:1889549"/>
<dbReference type="CTD" id="10628"/>
<dbReference type="MGI" id="MGI:1889549">
    <property type="gene designation" value="Txnip"/>
</dbReference>
<dbReference type="VEuPathDB" id="HostDB:ENSMUSG00000038393"/>
<dbReference type="eggNOG" id="KOG3780">
    <property type="taxonomic scope" value="Eukaryota"/>
</dbReference>
<dbReference type="GeneTree" id="ENSGT00940000158522"/>
<dbReference type="HOGENOM" id="CLU_039221_1_1_1"/>
<dbReference type="InParanoid" id="Q8BG60"/>
<dbReference type="OMA" id="TKKYFEV"/>
<dbReference type="OrthoDB" id="2333384at2759"/>
<dbReference type="PhylomeDB" id="Q8BG60"/>
<dbReference type="TreeFam" id="TF313650"/>
<dbReference type="Reactome" id="R-MMU-844456">
    <property type="pathway name" value="The NLRP3 inflammasome"/>
</dbReference>
<dbReference type="BioGRID-ORCS" id="56338">
    <property type="hits" value="0 hits in 77 CRISPR screens"/>
</dbReference>
<dbReference type="ChiTaRS" id="Txnip">
    <property type="organism name" value="mouse"/>
</dbReference>
<dbReference type="PRO" id="PR:Q8BG60"/>
<dbReference type="Proteomes" id="UP000000589">
    <property type="component" value="Chromosome 3"/>
</dbReference>
<dbReference type="RNAct" id="Q8BG60">
    <property type="molecule type" value="protein"/>
</dbReference>
<dbReference type="Bgee" id="ENSMUSG00000038393">
    <property type="expression patterns" value="Expressed in right lung and 280 other cell types or tissues"/>
</dbReference>
<dbReference type="GO" id="GO:0005737">
    <property type="term" value="C:cytoplasm"/>
    <property type="evidence" value="ECO:0000314"/>
    <property type="project" value="MGI"/>
</dbReference>
<dbReference type="GO" id="GO:0005829">
    <property type="term" value="C:cytosol"/>
    <property type="evidence" value="ECO:0000304"/>
    <property type="project" value="Reactome"/>
</dbReference>
<dbReference type="GO" id="GO:0004857">
    <property type="term" value="F:enzyme inhibitor activity"/>
    <property type="evidence" value="ECO:0000314"/>
    <property type="project" value="MGI"/>
</dbReference>
<dbReference type="GO" id="GO:0031625">
    <property type="term" value="F:ubiquitin protein ligase binding"/>
    <property type="evidence" value="ECO:0007669"/>
    <property type="project" value="Ensembl"/>
</dbReference>
<dbReference type="GO" id="GO:0071228">
    <property type="term" value="P:cellular response to tumor cell"/>
    <property type="evidence" value="ECO:0000250"/>
    <property type="project" value="UniProtKB"/>
</dbReference>
<dbReference type="GO" id="GO:0030216">
    <property type="term" value="P:keratinocyte differentiation"/>
    <property type="evidence" value="ECO:0007669"/>
    <property type="project" value="Ensembl"/>
</dbReference>
<dbReference type="GO" id="GO:0051782">
    <property type="term" value="P:negative regulation of cell division"/>
    <property type="evidence" value="ECO:0000250"/>
    <property type="project" value="UniProtKB"/>
</dbReference>
<dbReference type="GO" id="GO:0000122">
    <property type="term" value="P:negative regulation of transcription by RNA polymerase II"/>
    <property type="evidence" value="ECO:0000316"/>
    <property type="project" value="MGI"/>
</dbReference>
<dbReference type="GO" id="GO:0048008">
    <property type="term" value="P:platelet-derived growth factor receptor signaling pathway"/>
    <property type="evidence" value="ECO:0000315"/>
    <property type="project" value="MGI"/>
</dbReference>
<dbReference type="GO" id="GO:0043065">
    <property type="term" value="P:positive regulation of apoptotic process"/>
    <property type="evidence" value="ECO:0007669"/>
    <property type="project" value="Ensembl"/>
</dbReference>
<dbReference type="GO" id="GO:0006606">
    <property type="term" value="P:protein import into nucleus"/>
    <property type="evidence" value="ECO:0000315"/>
    <property type="project" value="MGI"/>
</dbReference>
<dbReference type="GO" id="GO:0042127">
    <property type="term" value="P:regulation of cell population proliferation"/>
    <property type="evidence" value="ECO:0007669"/>
    <property type="project" value="Ensembl"/>
</dbReference>
<dbReference type="GO" id="GO:0051592">
    <property type="term" value="P:response to calcium ion"/>
    <property type="evidence" value="ECO:0007669"/>
    <property type="project" value="Ensembl"/>
</dbReference>
<dbReference type="GO" id="GO:0032355">
    <property type="term" value="P:response to estradiol"/>
    <property type="evidence" value="ECO:0007669"/>
    <property type="project" value="Ensembl"/>
</dbReference>
<dbReference type="GO" id="GO:0009749">
    <property type="term" value="P:response to glucose"/>
    <property type="evidence" value="ECO:0007669"/>
    <property type="project" value="Ensembl"/>
</dbReference>
<dbReference type="GO" id="GO:0042542">
    <property type="term" value="P:response to hydrogen peroxide"/>
    <property type="evidence" value="ECO:0007669"/>
    <property type="project" value="Ensembl"/>
</dbReference>
<dbReference type="GO" id="GO:0009612">
    <property type="term" value="P:response to mechanical stimulus"/>
    <property type="evidence" value="ECO:0007669"/>
    <property type="project" value="Ensembl"/>
</dbReference>
<dbReference type="GO" id="GO:0006979">
    <property type="term" value="P:response to oxidative stress"/>
    <property type="evidence" value="ECO:0000314"/>
    <property type="project" value="MGI"/>
</dbReference>
<dbReference type="GO" id="GO:0032570">
    <property type="term" value="P:response to progesterone"/>
    <property type="evidence" value="ECO:0007669"/>
    <property type="project" value="Ensembl"/>
</dbReference>
<dbReference type="GO" id="GO:0009410">
    <property type="term" value="P:response to xenobiotic stimulus"/>
    <property type="evidence" value="ECO:0007669"/>
    <property type="project" value="Ensembl"/>
</dbReference>
<dbReference type="FunFam" id="2.60.40.640:FF:000016">
    <property type="entry name" value="thioredoxin-interacting protein-like"/>
    <property type="match status" value="1"/>
</dbReference>
<dbReference type="FunFam" id="2.60.40.640:FF:000017">
    <property type="entry name" value="thioredoxin-interacting protein-like"/>
    <property type="match status" value="1"/>
</dbReference>
<dbReference type="Gene3D" id="2.60.40.640">
    <property type="match status" value="2"/>
</dbReference>
<dbReference type="InterPro" id="IPR014752">
    <property type="entry name" value="Arrestin-like_C"/>
</dbReference>
<dbReference type="InterPro" id="IPR011021">
    <property type="entry name" value="Arrestin-like_N"/>
</dbReference>
<dbReference type="InterPro" id="IPR011022">
    <property type="entry name" value="Arrestin_C-like"/>
</dbReference>
<dbReference type="InterPro" id="IPR050357">
    <property type="entry name" value="Arrestin_domain-protein"/>
</dbReference>
<dbReference type="InterPro" id="IPR014756">
    <property type="entry name" value="Ig_E-set"/>
</dbReference>
<dbReference type="PANTHER" id="PTHR11188">
    <property type="entry name" value="ARRESTIN DOMAIN CONTAINING PROTEIN"/>
    <property type="match status" value="1"/>
</dbReference>
<dbReference type="PANTHER" id="PTHR11188:SF14">
    <property type="entry name" value="THIOREDOXIN-INTERACTING PROTEIN"/>
    <property type="match status" value="1"/>
</dbReference>
<dbReference type="Pfam" id="PF02752">
    <property type="entry name" value="Arrestin_C"/>
    <property type="match status" value="1"/>
</dbReference>
<dbReference type="Pfam" id="PF00339">
    <property type="entry name" value="Arrestin_N"/>
    <property type="match status" value="1"/>
</dbReference>
<dbReference type="SMART" id="SM01017">
    <property type="entry name" value="Arrestin_C"/>
    <property type="match status" value="1"/>
</dbReference>
<dbReference type="SUPFAM" id="SSF81296">
    <property type="entry name" value="E set domains"/>
    <property type="match status" value="2"/>
</dbReference>